<organism>
    <name type="scientific">Homo sapiens</name>
    <name type="common">Human</name>
    <dbReference type="NCBI Taxonomy" id="9606"/>
    <lineage>
        <taxon>Eukaryota</taxon>
        <taxon>Metazoa</taxon>
        <taxon>Chordata</taxon>
        <taxon>Craniata</taxon>
        <taxon>Vertebrata</taxon>
        <taxon>Euteleostomi</taxon>
        <taxon>Mammalia</taxon>
        <taxon>Eutheria</taxon>
        <taxon>Euarchontoglires</taxon>
        <taxon>Primates</taxon>
        <taxon>Haplorrhini</taxon>
        <taxon>Catarrhini</taxon>
        <taxon>Hominidae</taxon>
        <taxon>Homo</taxon>
    </lineage>
</organism>
<dbReference type="EMBL" id="L06175">
    <property type="protein sequence ID" value="AAA59986.1"/>
    <property type="status" value="ALT_FRAME"/>
    <property type="molecule type" value="mRNA"/>
</dbReference>
<dbReference type="EMBL" id="AK290875">
    <property type="protein sequence ID" value="BAF83564.1"/>
    <property type="molecule type" value="mRNA"/>
</dbReference>
<dbReference type="EMBL" id="BX640979">
    <property type="protein sequence ID" value="CAE45991.1"/>
    <property type="molecule type" value="mRNA"/>
</dbReference>
<dbReference type="EMBL" id="CH471081">
    <property type="protein sequence ID" value="EAX03398.1"/>
    <property type="molecule type" value="Genomic_DNA"/>
</dbReference>
<dbReference type="EMBL" id="BC106759">
    <property type="protein sequence ID" value="AAI06760.1"/>
    <property type="molecule type" value="mRNA"/>
</dbReference>
<dbReference type="IntAct" id="Q6MZN7">
    <property type="interactions" value="1"/>
</dbReference>
<dbReference type="MINT" id="Q6MZN7"/>
<dbReference type="iPTMnet" id="Q6MZN7"/>
<dbReference type="PhosphoSitePlus" id="Q6MZN7"/>
<dbReference type="BioMuta" id="HGNC:21659"/>
<dbReference type="ProteomicsDB" id="66575"/>
<dbReference type="AGR" id="HGNC:21659"/>
<dbReference type="GeneCards" id="HCP5"/>
<dbReference type="HGNC" id="HGNC:21659">
    <property type="gene designation" value="HCP5"/>
</dbReference>
<dbReference type="MIM" id="604676">
    <property type="type" value="gene"/>
</dbReference>
<dbReference type="neXtProt" id="NX_Q6MZN7"/>
<dbReference type="PharmGKB" id="PA134951826"/>
<dbReference type="InParanoid" id="Q6MZN7"/>
<dbReference type="PAN-GO" id="Q6MZN7">
    <property type="GO annotations" value="0 GO annotations based on evolutionary models"/>
</dbReference>
<dbReference type="PathwayCommons" id="Q6MZN7"/>
<dbReference type="ChiTaRS" id="HCP5">
    <property type="organism name" value="human"/>
</dbReference>
<dbReference type="Pharos" id="Q6MZN7">
    <property type="development level" value="Tdark"/>
</dbReference>
<dbReference type="PRO" id="PR:Q6MZN7"/>
<dbReference type="Proteomes" id="UP000005640">
    <property type="component" value="Unplaced"/>
</dbReference>
<dbReference type="RNAct" id="Q6MZN7">
    <property type="molecule type" value="protein"/>
</dbReference>
<gene>
    <name type="primary">HCP5</name>
</gene>
<sequence>MLLRMSEHRNEALGNYLEMRLKSSFLRGLGSWKSNPLRLGGWTILLTLTMGQGEPGGPQGDPWVPHELLLPSLCDSSHASSWGSGSITCAWRGGDSSSHPLVSGHILSNSPVAAVMCSSMGTHLSPFKGTLL</sequence>
<protein>
    <recommendedName>
        <fullName>HLA class I histocompatibility antigen protein P5</fullName>
    </recommendedName>
    <alternativeName>
        <fullName>HLA complex protein P5</fullName>
    </alternativeName>
    <alternativeName>
        <fullName>Protein P5-1</fullName>
    </alternativeName>
</protein>
<reference key="1">
    <citation type="journal article" date="1993" name="Immunogenetics">
        <title>A novel coding sequence belonging to a new multicopy gene family mapping within the human MHC class I region.</title>
        <authorList>
            <person name="Vernet C."/>
            <person name="Ribouchon M.-T."/>
            <person name="Chimini G."/>
            <person name="Jouanolle A.-M."/>
            <person name="Sidibe I."/>
            <person name="Pontarotti P."/>
        </authorList>
    </citation>
    <scope>NUCLEOTIDE SEQUENCE [MRNA]</scope>
    <scope>TISSUE SPECIFICITY</scope>
    <source>
        <tissue>Spleen</tissue>
    </source>
</reference>
<reference key="2">
    <citation type="journal article" date="2004" name="Nat. Genet.">
        <title>Complete sequencing and characterization of 21,243 full-length human cDNAs.</title>
        <authorList>
            <person name="Ota T."/>
            <person name="Suzuki Y."/>
            <person name="Nishikawa T."/>
            <person name="Otsuki T."/>
            <person name="Sugiyama T."/>
            <person name="Irie R."/>
            <person name="Wakamatsu A."/>
            <person name="Hayashi K."/>
            <person name="Sato H."/>
            <person name="Nagai K."/>
            <person name="Kimura K."/>
            <person name="Makita H."/>
            <person name="Sekine M."/>
            <person name="Obayashi M."/>
            <person name="Nishi T."/>
            <person name="Shibahara T."/>
            <person name="Tanaka T."/>
            <person name="Ishii S."/>
            <person name="Yamamoto J."/>
            <person name="Saito K."/>
            <person name="Kawai Y."/>
            <person name="Isono Y."/>
            <person name="Nakamura Y."/>
            <person name="Nagahari K."/>
            <person name="Murakami K."/>
            <person name="Yasuda T."/>
            <person name="Iwayanagi T."/>
            <person name="Wagatsuma M."/>
            <person name="Shiratori A."/>
            <person name="Sudo H."/>
            <person name="Hosoiri T."/>
            <person name="Kaku Y."/>
            <person name="Kodaira H."/>
            <person name="Kondo H."/>
            <person name="Sugawara M."/>
            <person name="Takahashi M."/>
            <person name="Kanda K."/>
            <person name="Yokoi T."/>
            <person name="Furuya T."/>
            <person name="Kikkawa E."/>
            <person name="Omura Y."/>
            <person name="Abe K."/>
            <person name="Kamihara K."/>
            <person name="Katsuta N."/>
            <person name="Sato K."/>
            <person name="Tanikawa M."/>
            <person name="Yamazaki M."/>
            <person name="Ninomiya K."/>
            <person name="Ishibashi T."/>
            <person name="Yamashita H."/>
            <person name="Murakawa K."/>
            <person name="Fujimori K."/>
            <person name="Tanai H."/>
            <person name="Kimata M."/>
            <person name="Watanabe M."/>
            <person name="Hiraoka S."/>
            <person name="Chiba Y."/>
            <person name="Ishida S."/>
            <person name="Ono Y."/>
            <person name="Takiguchi S."/>
            <person name="Watanabe S."/>
            <person name="Yosida M."/>
            <person name="Hotuta T."/>
            <person name="Kusano J."/>
            <person name="Kanehori K."/>
            <person name="Takahashi-Fujii A."/>
            <person name="Hara H."/>
            <person name="Tanase T.-O."/>
            <person name="Nomura Y."/>
            <person name="Togiya S."/>
            <person name="Komai F."/>
            <person name="Hara R."/>
            <person name="Takeuchi K."/>
            <person name="Arita M."/>
            <person name="Imose N."/>
            <person name="Musashino K."/>
            <person name="Yuuki H."/>
            <person name="Oshima A."/>
            <person name="Sasaki N."/>
            <person name="Aotsuka S."/>
            <person name="Yoshikawa Y."/>
            <person name="Matsunawa H."/>
            <person name="Ichihara T."/>
            <person name="Shiohata N."/>
            <person name="Sano S."/>
            <person name="Moriya S."/>
            <person name="Momiyama H."/>
            <person name="Satoh N."/>
            <person name="Takami S."/>
            <person name="Terashima Y."/>
            <person name="Suzuki O."/>
            <person name="Nakagawa S."/>
            <person name="Senoh A."/>
            <person name="Mizoguchi H."/>
            <person name="Goto Y."/>
            <person name="Shimizu F."/>
            <person name="Wakebe H."/>
            <person name="Hishigaki H."/>
            <person name="Watanabe T."/>
            <person name="Sugiyama A."/>
            <person name="Takemoto M."/>
            <person name="Kawakami B."/>
            <person name="Yamazaki M."/>
            <person name="Watanabe K."/>
            <person name="Kumagai A."/>
            <person name="Itakura S."/>
            <person name="Fukuzumi Y."/>
            <person name="Fujimori Y."/>
            <person name="Komiyama M."/>
            <person name="Tashiro H."/>
            <person name="Tanigami A."/>
            <person name="Fujiwara T."/>
            <person name="Ono T."/>
            <person name="Yamada K."/>
            <person name="Fujii Y."/>
            <person name="Ozaki K."/>
            <person name="Hirao M."/>
            <person name="Ohmori Y."/>
            <person name="Kawabata A."/>
            <person name="Hikiji T."/>
            <person name="Kobatake N."/>
            <person name="Inagaki H."/>
            <person name="Ikema Y."/>
            <person name="Okamoto S."/>
            <person name="Okitani R."/>
            <person name="Kawakami T."/>
            <person name="Noguchi S."/>
            <person name="Itoh T."/>
            <person name="Shigeta K."/>
            <person name="Senba T."/>
            <person name="Matsumura K."/>
            <person name="Nakajima Y."/>
            <person name="Mizuno T."/>
            <person name="Morinaga M."/>
            <person name="Sasaki M."/>
            <person name="Togashi T."/>
            <person name="Oyama M."/>
            <person name="Hata H."/>
            <person name="Watanabe M."/>
            <person name="Komatsu T."/>
            <person name="Mizushima-Sugano J."/>
            <person name="Satoh T."/>
            <person name="Shirai Y."/>
            <person name="Takahashi Y."/>
            <person name="Nakagawa K."/>
            <person name="Okumura K."/>
            <person name="Nagase T."/>
            <person name="Nomura N."/>
            <person name="Kikuchi H."/>
            <person name="Masuho Y."/>
            <person name="Yamashita R."/>
            <person name="Nakai K."/>
            <person name="Yada T."/>
            <person name="Nakamura Y."/>
            <person name="Ohara O."/>
            <person name="Isogai T."/>
            <person name="Sugano S."/>
        </authorList>
    </citation>
    <scope>NUCLEOTIDE SEQUENCE [LARGE SCALE MRNA]</scope>
</reference>
<reference key="3">
    <citation type="journal article" date="2007" name="BMC Genomics">
        <title>The full-ORF clone resource of the German cDNA consortium.</title>
        <authorList>
            <person name="Bechtel S."/>
            <person name="Rosenfelder H."/>
            <person name="Duda A."/>
            <person name="Schmidt C.P."/>
            <person name="Ernst U."/>
            <person name="Wellenreuther R."/>
            <person name="Mehrle A."/>
            <person name="Schuster C."/>
            <person name="Bahr A."/>
            <person name="Bloecker H."/>
            <person name="Heubner D."/>
            <person name="Hoerlein A."/>
            <person name="Michel G."/>
            <person name="Wedler H."/>
            <person name="Koehrer K."/>
            <person name="Ottenwaelder B."/>
            <person name="Poustka A."/>
            <person name="Wiemann S."/>
            <person name="Schupp I."/>
        </authorList>
    </citation>
    <scope>NUCLEOTIDE SEQUENCE [LARGE SCALE MRNA]</scope>
    <source>
        <tissue>Rectum tumor</tissue>
    </source>
</reference>
<reference key="4">
    <citation type="submission" date="2005-07" db="EMBL/GenBank/DDBJ databases">
        <authorList>
            <person name="Mural R.J."/>
            <person name="Istrail S."/>
            <person name="Sutton G.G."/>
            <person name="Florea L."/>
            <person name="Halpern A.L."/>
            <person name="Mobarry C.M."/>
            <person name="Lippert R."/>
            <person name="Walenz B."/>
            <person name="Shatkay H."/>
            <person name="Dew I."/>
            <person name="Miller J.R."/>
            <person name="Flanigan M.J."/>
            <person name="Edwards N.J."/>
            <person name="Bolanos R."/>
            <person name="Fasulo D."/>
            <person name="Halldorsson B.V."/>
            <person name="Hannenhalli S."/>
            <person name="Turner R."/>
            <person name="Yooseph S."/>
            <person name="Lu F."/>
            <person name="Nusskern D.R."/>
            <person name="Shue B.C."/>
            <person name="Zheng X.H."/>
            <person name="Zhong F."/>
            <person name="Delcher A.L."/>
            <person name="Huson D.H."/>
            <person name="Kravitz S.A."/>
            <person name="Mouchard L."/>
            <person name="Reinert K."/>
            <person name="Remington K.A."/>
            <person name="Clark A.G."/>
            <person name="Waterman M.S."/>
            <person name="Eichler E.E."/>
            <person name="Adams M.D."/>
            <person name="Hunkapiller M.W."/>
            <person name="Myers E.W."/>
            <person name="Venter J.C."/>
        </authorList>
    </citation>
    <scope>NUCLEOTIDE SEQUENCE [LARGE SCALE GENOMIC DNA]</scope>
</reference>
<reference key="5">
    <citation type="journal article" date="2004" name="Genome Res.">
        <title>The status, quality, and expansion of the NIH full-length cDNA project: the Mammalian Gene Collection (MGC).</title>
        <authorList>
            <consortium name="The MGC Project Team"/>
        </authorList>
    </citation>
    <scope>NUCLEOTIDE SEQUENCE [LARGE SCALE MRNA]</scope>
</reference>
<reference key="6">
    <citation type="journal article" date="1999" name="Immunogenetics">
        <title>The P5 multicopy gene family in the MHC is related in sequence to human endogenous retroviruses HERV-L and HERV-16.</title>
        <authorList>
            <person name="Kulski J.K."/>
            <person name="Dawkins R.L."/>
        </authorList>
    </citation>
    <scope>FUNCTION</scope>
</reference>
<reference key="7">
    <citation type="journal article" date="2007" name="Science">
        <title>A whole-genome association study of major determinants for host control of HIV-1.</title>
        <authorList>
            <person name="Fellay J."/>
            <person name="Shianna K.V."/>
            <person name="Ge D."/>
            <person name="Colombo S."/>
            <person name="Ledergerber B."/>
            <person name="Weale M."/>
            <person name="Zhang K."/>
            <person name="Gumbs C."/>
            <person name="Castagna A."/>
            <person name="Cossarizza A."/>
            <person name="Cozzi-Lepri A."/>
            <person name="De Luca A."/>
            <person name="Easterbrook P."/>
            <person name="Francioli P."/>
            <person name="Mallal S."/>
            <person name="Martinez-Picado J."/>
            <person name="Miro J.M."/>
            <person name="Obel N."/>
            <person name="Smith J.P."/>
            <person name="Wyniger J."/>
            <person name="Descombes P."/>
            <person name="Antonarakis S.E."/>
            <person name="Letvin N.L."/>
            <person name="McMichael A.J."/>
            <person name="Haynes B.F."/>
            <person name="Telenti A."/>
            <person name="Goldstein D.B."/>
        </authorList>
    </citation>
    <scope>VARIANT GLY-112</scope>
</reference>
<reference key="8">
    <citation type="journal article" date="2008" name="AIDS">
        <title>The role of protective HCP5 and HLA-C associated polymorphisms in the control of HIV-1 replication in a subset of elite suppressors.</title>
        <authorList>
            <person name="Han Y."/>
            <person name="Lai J."/>
            <person name="Barditch-Crovo P."/>
            <person name="Gallant J.E."/>
            <person name="Williams T.M."/>
            <person name="Siliciano R.F."/>
            <person name="Blankson J.N."/>
        </authorList>
    </citation>
    <scope>VARIANT GLY-112</scope>
</reference>
<keyword id="KW-1267">Proteomics identification</keyword>
<keyword id="KW-1185">Reference proteome</keyword>
<name>HCP5_HUMAN</name>
<proteinExistence type="evidence at protein level"/>
<feature type="chain" id="PRO_0000329059" description="HLA class I histocompatibility antigen protein P5">
    <location>
        <begin position="1"/>
        <end position="132"/>
    </location>
</feature>
<feature type="sequence variant" id="VAR_042638" description="In dbSNP:rs17206855.">
    <original>W</original>
    <variation>R</variation>
    <location>
        <position position="32"/>
    </location>
</feature>
<feature type="sequence variant" id="VAR_042639" description="In dbSNP:rs2255221.">
    <original>W</original>
    <variation>C</variation>
    <location>
        <position position="82"/>
    </location>
</feature>
<feature type="sequence variant" id="VAR_042640" description="In dbSNP:rs2255223.">
    <original>G</original>
    <variation>E</variation>
    <location>
        <position position="93"/>
    </location>
</feature>
<feature type="sequence variant" id="VAR_042641" description="Associated with low viral load in HIV patients; dbSNP:rs2395029." evidence="1 2">
    <original>V</original>
    <variation>G</variation>
    <location>
        <position position="112"/>
    </location>
</feature>
<feature type="sequence variant" id="VAR_042642" description="In dbSNP:rs3130907.">
    <original>H</original>
    <variation>R</variation>
    <location>
        <position position="123"/>
    </location>
</feature>
<feature type="sequence conflict" description="In Ref. 1; AAA59986." evidence="4" ref="1">
    <original>QG</original>
    <variation>K</variation>
    <location>
        <begin position="59"/>
        <end position="60"/>
    </location>
</feature>
<accession>Q6MZN7</accession>
<accession>Q04490</accession>
<comment type="tissue specificity">
    <text evidence="3">Expressed in lymphoid tissues; Detected in spleen as well as in B-cell lines, NK cell lines and activated lymphocytes.</text>
</comment>
<comment type="miscellaneous">
    <text>Variation Gly-112 is associated with low viral loads in untreated HIV patients. The level of circulating virus in the plasma of HIV patients (viral set point) varies among individuals during the nonsymptomatic phase preceding the progression to AIDS. This polymorphism explains 9.6% of the total variation in set point and is associated with the HLA-B*5701 allele, which has the strongest described protective impact on HIV disease progression. However, it is possible that HPC5 polymorphism, and not HLA-B*5701 allele, plays a direct role in the control in viremia in HIV patients.</text>
</comment>
<comment type="miscellaneous">
    <text>HCP5 is localized within the MHC class I region, but is not structurally related to MHC class I genes. HCP5 is related in sequence to human endogenous retroviruses HERV-L and HERV-16. It has sequence homology with retroviral Pol genes in HERV retroviral element; thus, it is itself a good candidate to interact with HIV-1, possibly through an antisense mechanism against retroviral transcript.</text>
</comment>
<comment type="sequence caution" evidence="4">
    <conflict type="frameshift">
        <sequence resource="EMBL-CDS" id="AAA59986"/>
    </conflict>
</comment>
<evidence type="ECO:0000269" key="1">
    <source>
    </source>
</evidence>
<evidence type="ECO:0000269" key="2">
    <source>
    </source>
</evidence>
<evidence type="ECO:0000269" key="3">
    <source>
    </source>
</evidence>
<evidence type="ECO:0000305" key="4"/>